<gene>
    <name evidence="1" type="primary">btuC</name>
    <name type="ordered locus">YPTS_2408</name>
</gene>
<proteinExistence type="inferred from homology"/>
<evidence type="ECO:0000255" key="1">
    <source>
        <dbReference type="HAMAP-Rule" id="MF_01004"/>
    </source>
</evidence>
<accession>B2K660</accession>
<keyword id="KW-0997">Cell inner membrane</keyword>
<keyword id="KW-1003">Cell membrane</keyword>
<keyword id="KW-0472">Membrane</keyword>
<keyword id="KW-0812">Transmembrane</keyword>
<keyword id="KW-1133">Transmembrane helix</keyword>
<keyword id="KW-0813">Transport</keyword>
<reference key="1">
    <citation type="submission" date="2008-04" db="EMBL/GenBank/DDBJ databases">
        <title>Complete sequence of Yersinia pseudotuberculosis PB1/+.</title>
        <authorList>
            <person name="Copeland A."/>
            <person name="Lucas S."/>
            <person name="Lapidus A."/>
            <person name="Glavina del Rio T."/>
            <person name="Dalin E."/>
            <person name="Tice H."/>
            <person name="Bruce D."/>
            <person name="Goodwin L."/>
            <person name="Pitluck S."/>
            <person name="Munk A.C."/>
            <person name="Brettin T."/>
            <person name="Detter J.C."/>
            <person name="Han C."/>
            <person name="Tapia R."/>
            <person name="Schmutz J."/>
            <person name="Larimer F."/>
            <person name="Land M."/>
            <person name="Hauser L."/>
            <person name="Challacombe J.F."/>
            <person name="Green L."/>
            <person name="Lindler L.E."/>
            <person name="Nikolich M.P."/>
            <person name="Richardson P."/>
        </authorList>
    </citation>
    <scope>NUCLEOTIDE SEQUENCE [LARGE SCALE GENOMIC DNA]</scope>
    <source>
        <strain>PB1/+</strain>
    </source>
</reference>
<name>BTUC_YERPB</name>
<sequence length="335" mass="36332">MQTSQLFTALQQRQRQRDYRYLTGLVVMLLFALLISLCAGDVWIWPEHWFSESGKLFVWQLRLPRSMAVIMVGASLAVSGAVMQALFENPLAEPGLLGVANGAGVALVTAVLLGHGLLPIWVLSTCAIIGALLMTSILLSFTRRRLLTNAQLLLVGVALGIICSAMMTWAVYFSTSLDLRQLMYWMMGGFSGVDWRQQSLVLALLPTVIWLCCQGRVLNFMSLGEQQARQLGVSLHLWRNLLVLAIGLLVGISVALAGVISFIGLVIPHILRLTGLTDQRRLLAGCAFAGGGVLLLADVVARTVLSSAELPIGVVTATLGSPLFIWLLIRVKGVK</sequence>
<comment type="function">
    <text evidence="1">Part of the ABC transporter complex BtuCDF involved in vitamin B12 import. Involved in the translocation of the substrate across the membrane.</text>
</comment>
<comment type="subunit">
    <text evidence="1">The complex is composed of two ATP-binding proteins (BtuD), two transmembrane proteins (BtuC) and a solute-binding protein (BtuF).</text>
</comment>
<comment type="subcellular location">
    <subcellularLocation>
        <location evidence="1">Cell inner membrane</location>
        <topology evidence="1">Multi-pass membrane protein</topology>
    </subcellularLocation>
</comment>
<comment type="similarity">
    <text evidence="1">Belongs to the binding-protein-dependent transport system permease family. FecCD subfamily.</text>
</comment>
<feature type="chain" id="PRO_1000201561" description="Vitamin B12 import system permease protein BtuC">
    <location>
        <begin position="1"/>
        <end position="335"/>
    </location>
</feature>
<feature type="transmembrane region" description="Helical" evidence="1">
    <location>
        <begin position="25"/>
        <end position="45"/>
    </location>
</feature>
<feature type="transmembrane region" description="Helical" evidence="1">
    <location>
        <begin position="67"/>
        <end position="87"/>
    </location>
</feature>
<feature type="transmembrane region" description="Helical" evidence="1">
    <location>
        <begin position="94"/>
        <end position="113"/>
    </location>
</feature>
<feature type="transmembrane region" description="Helical" evidence="1">
    <location>
        <begin position="117"/>
        <end position="139"/>
    </location>
</feature>
<feature type="transmembrane region" description="Helical" evidence="1">
    <location>
        <begin position="153"/>
        <end position="173"/>
    </location>
</feature>
<feature type="transmembrane region" description="Helical" evidence="1">
    <location>
        <begin position="243"/>
        <end position="263"/>
    </location>
</feature>
<feature type="transmembrane region" description="Helical" evidence="1">
    <location>
        <begin position="281"/>
        <end position="301"/>
    </location>
</feature>
<feature type="transmembrane region" description="Helical" evidence="1">
    <location>
        <begin position="309"/>
        <end position="329"/>
    </location>
</feature>
<organism>
    <name type="scientific">Yersinia pseudotuberculosis serotype IB (strain PB1/+)</name>
    <dbReference type="NCBI Taxonomy" id="502801"/>
    <lineage>
        <taxon>Bacteria</taxon>
        <taxon>Pseudomonadati</taxon>
        <taxon>Pseudomonadota</taxon>
        <taxon>Gammaproteobacteria</taxon>
        <taxon>Enterobacterales</taxon>
        <taxon>Yersiniaceae</taxon>
        <taxon>Yersinia</taxon>
    </lineage>
</organism>
<protein>
    <recommendedName>
        <fullName evidence="1">Vitamin B12 import system permease protein BtuC</fullName>
    </recommendedName>
</protein>
<dbReference type="EMBL" id="CP001048">
    <property type="protein sequence ID" value="ACC89369.1"/>
    <property type="molecule type" value="Genomic_DNA"/>
</dbReference>
<dbReference type="RefSeq" id="WP_002220283.1">
    <property type="nucleotide sequence ID" value="NZ_CP009780.1"/>
</dbReference>
<dbReference type="SMR" id="B2K660"/>
<dbReference type="GeneID" id="57976252"/>
<dbReference type="KEGG" id="ypb:YPTS_2408"/>
<dbReference type="PATRIC" id="fig|502801.10.peg.1814"/>
<dbReference type="GO" id="GO:0005886">
    <property type="term" value="C:plasma membrane"/>
    <property type="evidence" value="ECO:0007669"/>
    <property type="project" value="UniProtKB-SubCell"/>
</dbReference>
<dbReference type="GO" id="GO:0090482">
    <property type="term" value="F:vitamin transmembrane transporter activity"/>
    <property type="evidence" value="ECO:0007669"/>
    <property type="project" value="UniProtKB-UniRule"/>
</dbReference>
<dbReference type="GO" id="GO:0015889">
    <property type="term" value="P:cobalamin transport"/>
    <property type="evidence" value="ECO:0007669"/>
    <property type="project" value="UniProtKB-UniRule"/>
</dbReference>
<dbReference type="CDD" id="cd06550">
    <property type="entry name" value="TM_ABC_iron-siderophores_like"/>
    <property type="match status" value="1"/>
</dbReference>
<dbReference type="FunFam" id="1.10.3470.10:FF:000001">
    <property type="entry name" value="Vitamin B12 ABC transporter permease BtuC"/>
    <property type="match status" value="1"/>
</dbReference>
<dbReference type="Gene3D" id="1.10.3470.10">
    <property type="entry name" value="ABC transporter involved in vitamin B12 uptake, BtuC"/>
    <property type="match status" value="1"/>
</dbReference>
<dbReference type="HAMAP" id="MF_01004">
    <property type="entry name" value="BtuC"/>
    <property type="match status" value="1"/>
</dbReference>
<dbReference type="InterPro" id="IPR037294">
    <property type="entry name" value="ABC_BtuC-like"/>
</dbReference>
<dbReference type="InterPro" id="IPR023691">
    <property type="entry name" value="ABC_transptr_BtuC"/>
</dbReference>
<dbReference type="InterPro" id="IPR000522">
    <property type="entry name" value="ABC_transptr_permease_BtuC"/>
</dbReference>
<dbReference type="NCBIfam" id="NF003001">
    <property type="entry name" value="PRK03784.1"/>
    <property type="match status" value="1"/>
</dbReference>
<dbReference type="PANTHER" id="PTHR30472">
    <property type="entry name" value="FERRIC ENTEROBACTIN TRANSPORT SYSTEM PERMEASE PROTEIN"/>
    <property type="match status" value="1"/>
</dbReference>
<dbReference type="PANTHER" id="PTHR30472:SF29">
    <property type="entry name" value="VITAMIN B12 IMPORT SYSTEM PERMEASE PROTEIN BTUC"/>
    <property type="match status" value="1"/>
</dbReference>
<dbReference type="Pfam" id="PF01032">
    <property type="entry name" value="FecCD"/>
    <property type="match status" value="1"/>
</dbReference>
<dbReference type="SUPFAM" id="SSF81345">
    <property type="entry name" value="ABC transporter involved in vitamin B12 uptake, BtuC"/>
    <property type="match status" value="1"/>
</dbReference>